<organism>
    <name type="scientific">Xenopus laevis</name>
    <name type="common">African clawed frog</name>
    <dbReference type="NCBI Taxonomy" id="8355"/>
    <lineage>
        <taxon>Eukaryota</taxon>
        <taxon>Metazoa</taxon>
        <taxon>Chordata</taxon>
        <taxon>Craniata</taxon>
        <taxon>Vertebrata</taxon>
        <taxon>Euteleostomi</taxon>
        <taxon>Amphibia</taxon>
        <taxon>Batrachia</taxon>
        <taxon>Anura</taxon>
        <taxon>Pipoidea</taxon>
        <taxon>Pipidae</taxon>
        <taxon>Xenopodinae</taxon>
        <taxon>Xenopus</taxon>
        <taxon>Xenopus</taxon>
    </lineage>
</organism>
<dbReference type="EMBL" id="BC124843">
    <property type="protein sequence ID" value="AAI24844.1"/>
    <property type="molecule type" value="mRNA"/>
</dbReference>
<dbReference type="RefSeq" id="NP_001116355.1">
    <property type="nucleotide sequence ID" value="NM_001122883.1"/>
</dbReference>
<dbReference type="DNASU" id="495829"/>
<dbReference type="GeneID" id="495829"/>
<dbReference type="KEGG" id="xla:495829"/>
<dbReference type="AGR" id="Xenbase:XB-GENE-989161"/>
<dbReference type="CTD" id="495829"/>
<dbReference type="Xenbase" id="XB-GENE-989161">
    <property type="gene designation" value="erlec1.S"/>
</dbReference>
<dbReference type="OMA" id="HGKDDIY"/>
<dbReference type="OrthoDB" id="239053at2759"/>
<dbReference type="Proteomes" id="UP000186698">
    <property type="component" value="Chromosome 5S"/>
</dbReference>
<dbReference type="Bgee" id="495829">
    <property type="expression patterns" value="Expressed in pancreas and 19 other cell types or tissues"/>
</dbReference>
<dbReference type="GO" id="GO:0005788">
    <property type="term" value="C:endoplasmic reticulum lumen"/>
    <property type="evidence" value="ECO:0000250"/>
    <property type="project" value="UniProtKB"/>
</dbReference>
<dbReference type="GO" id="GO:0030968">
    <property type="term" value="P:endoplasmic reticulum unfolded protein response"/>
    <property type="evidence" value="ECO:0007669"/>
    <property type="project" value="InterPro"/>
</dbReference>
<dbReference type="GO" id="GO:0036503">
    <property type="term" value="P:ERAD pathway"/>
    <property type="evidence" value="ECO:0000250"/>
    <property type="project" value="UniProtKB"/>
</dbReference>
<dbReference type="GO" id="GO:0030970">
    <property type="term" value="P:retrograde protein transport, ER to cytosol"/>
    <property type="evidence" value="ECO:0000318"/>
    <property type="project" value="GO_Central"/>
</dbReference>
<dbReference type="FunFam" id="2.70.130.10:FF:000001">
    <property type="entry name" value="Endoplasmic reticulum lectin 1"/>
    <property type="match status" value="1"/>
</dbReference>
<dbReference type="FunFam" id="2.70.130.10:FF:000003">
    <property type="entry name" value="Endoplasmic reticulum lectin 1"/>
    <property type="match status" value="1"/>
</dbReference>
<dbReference type="Gene3D" id="2.70.130.10">
    <property type="entry name" value="Mannose-6-phosphate receptor binding domain"/>
    <property type="match status" value="2"/>
</dbReference>
<dbReference type="InterPro" id="IPR009011">
    <property type="entry name" value="Man6P_isomerase_rcpt-bd_dom_sf"/>
</dbReference>
<dbReference type="InterPro" id="IPR044865">
    <property type="entry name" value="MRH_dom"/>
</dbReference>
<dbReference type="InterPro" id="IPR045149">
    <property type="entry name" value="OS-9-like"/>
</dbReference>
<dbReference type="InterPro" id="IPR012913">
    <property type="entry name" value="OS9-like_dom"/>
</dbReference>
<dbReference type="PANTHER" id="PTHR15414:SF0">
    <property type="entry name" value="ENDOPLASMIC RETICULUM LECTIN 1"/>
    <property type="match status" value="1"/>
</dbReference>
<dbReference type="PANTHER" id="PTHR15414">
    <property type="entry name" value="OS-9-RELATED"/>
    <property type="match status" value="1"/>
</dbReference>
<dbReference type="Pfam" id="PF07915">
    <property type="entry name" value="PRKCSH"/>
    <property type="match status" value="2"/>
</dbReference>
<dbReference type="SUPFAM" id="SSF50911">
    <property type="entry name" value="Mannose 6-phosphate receptor domain"/>
    <property type="match status" value="2"/>
</dbReference>
<dbReference type="PROSITE" id="PS51914">
    <property type="entry name" value="MRH"/>
    <property type="match status" value="2"/>
</dbReference>
<gene>
    <name type="primary">erlec1</name>
</gene>
<sequence>MRRSDRFPCAGASLLVVLCGVFPSSFGGRTLPGLSDDIPFRLKWPGPDFTLPTAGIPYKEENYIIMTTADQETYKCMLPLMANGNEEEDREYKGPSPGELLDPLFKLSSCSYRIESYWTYEVCHGKYIRQYHEEKEAGQKLNIQEYYLGKTVKKSPSEAGENQEDKERTEGHKDIHTKNIEGQMTPYYPVEMTNGTPCSLKQNQARSSTVMYICHPEAKHEILSVAEITTCEYEVVILTPLLCNHPKYKFRPSPINDIFCQSMPGSPLRPQSLEKLEHQQEEIKSPLKAKEEEQQLLKEKFSTIHKPVTVGSQQQVTVGTTHISRLTDEQLIKEFLSGSYCFHGGVGWWKYEFCYGKYVHQYHEDKDTGKTTVVVGTWKAEEHLDWAKKNLAKAYMSTADGVQTVKTVSHFYGGGDLCEVNEQPRQVVVKLKCKQSESPHAVTVYMLEPQTCQYILGVESPVICKILDTADENGLLSIPN</sequence>
<accession>Q08B78</accession>
<evidence type="ECO:0000250" key="1"/>
<evidence type="ECO:0000255" key="2"/>
<evidence type="ECO:0000255" key="3">
    <source>
        <dbReference type="PROSITE-ProRule" id="PRU01262"/>
    </source>
</evidence>
<evidence type="ECO:0000256" key="4">
    <source>
        <dbReference type="SAM" id="MobiDB-lite"/>
    </source>
</evidence>
<evidence type="ECO:0000269" key="5">
    <source>
    </source>
</evidence>
<keyword id="KW-1015">Disulfide bond</keyword>
<keyword id="KW-0256">Endoplasmic reticulum</keyword>
<keyword id="KW-1185">Reference proteome</keyword>
<keyword id="KW-0677">Repeat</keyword>
<keyword id="KW-0732">Signal</keyword>
<reference key="1">
    <citation type="submission" date="2006-10" db="EMBL/GenBank/DDBJ databases">
        <authorList>
            <consortium name="NIH - Xenopus Gene Collection (XGC) project"/>
        </authorList>
    </citation>
    <scope>NUCLEOTIDE SEQUENCE [LARGE SCALE MRNA]</scope>
    <source>
        <tissue>Embryo</tissue>
    </source>
</reference>
<reference key="2">
    <citation type="journal article" date="2006" name="J. Biol. Chem.">
        <title>The MRH protein Erlectin is a member of the endoplasmic reticulum synexpression group and functions in N-glycan recognition.</title>
        <authorList>
            <person name="Cruciat C.-M."/>
            <person name="Hassler C."/>
            <person name="Niehrs C."/>
        </authorList>
    </citation>
    <scope>DISRUPTION PHENOTYPE</scope>
    <scope>DEVELOPMENTAL STAGE</scope>
</reference>
<name>ERLEC_XENLA</name>
<comment type="function">
    <text evidence="1">Probable lectin that binds selectively to improperly folded lumenal proteins. May function in endoplasmic reticulum quality control and endoplasmic reticulum-associated degradation (ERAD) of both non-glycosylated proteins and glycoproteins (By similarity).</text>
</comment>
<comment type="subcellular location">
    <subcellularLocation>
        <location evidence="1">Endoplasmic reticulum lumen</location>
    </subcellularLocation>
</comment>
<comment type="developmental stage">
    <text evidence="5">Maternally expressed. Levels decrease during gastrulation and are then increasingly up-regulated during neurulation and tailbud stages. Weak ubiquitous expression is detected at all stages of development.</text>
</comment>
<comment type="disruption phenotype">
    <text evidence="5">Embryos display head and axial defects during organogenesis.</text>
</comment>
<feature type="signal peptide" evidence="2">
    <location>
        <begin position="1"/>
        <end position="27"/>
    </location>
</feature>
<feature type="chain" id="PRO_0000386451" description="Endoplasmic reticulum lectin 1">
    <location>
        <begin position="28"/>
        <end position="480"/>
    </location>
</feature>
<feature type="domain" description="MRH 1" evidence="3">
    <location>
        <begin position="108"/>
        <end position="245"/>
    </location>
</feature>
<feature type="domain" description="MRH 2" evidence="3">
    <location>
        <begin position="339"/>
        <end position="466"/>
    </location>
</feature>
<feature type="region of interest" description="Disordered" evidence="4">
    <location>
        <begin position="152"/>
        <end position="172"/>
    </location>
</feature>
<feature type="compositionally biased region" description="Basic and acidic residues" evidence="4">
    <location>
        <begin position="163"/>
        <end position="172"/>
    </location>
</feature>
<feature type="disulfide bond" evidence="3">
    <location>
        <begin position="110"/>
        <end position="123"/>
    </location>
</feature>
<feature type="disulfide bond" evidence="3">
    <location>
        <begin position="198"/>
        <end position="231"/>
    </location>
</feature>
<feature type="disulfide bond" evidence="3">
    <location>
        <begin position="214"/>
        <end position="243"/>
    </location>
</feature>
<feature type="disulfide bond" evidence="3">
    <location>
        <begin position="341"/>
        <end position="354"/>
    </location>
</feature>
<feature type="disulfide bond" evidence="3">
    <location>
        <begin position="418"/>
        <end position="452"/>
    </location>
</feature>
<feature type="disulfide bond" evidence="3">
    <location>
        <begin position="433"/>
        <end position="464"/>
    </location>
</feature>
<protein>
    <recommendedName>
        <fullName>Endoplasmic reticulum lectin 1</fullName>
    </recommendedName>
    <alternativeName>
        <fullName>ER lectin</fullName>
        <shortName>Erlectin</shortName>
    </alternativeName>
</protein>
<proteinExistence type="evidence at transcript level"/>